<gene>
    <name type="ordered locus">YDR431W</name>
</gene>
<sequence>MEYTSNWIFSNGLCLGIRGRKSLKPQHIYRSIFYSNFILLSSLLIGGLLITIACYHICQCLFNNSMIYYYLYHRAPPYIYHCKRRAKFFTFFFFATQRDLKRT</sequence>
<name>YD431_YEAST</name>
<protein>
    <recommendedName>
        <fullName>Putative uncharacterized protein YDR431W</fullName>
    </recommendedName>
</protein>
<accession>Q04069</accession>
<evidence type="ECO:0000255" key="1"/>
<evidence type="ECO:0000305" key="2"/>
<evidence type="ECO:0000305" key="3">
    <source>
    </source>
</evidence>
<dbReference type="EMBL" id="U33007">
    <property type="protein sequence ID" value="AAB64864.1"/>
    <property type="molecule type" value="Genomic_DNA"/>
</dbReference>
<dbReference type="PIR" id="S69712">
    <property type="entry name" value="S69712"/>
</dbReference>
<dbReference type="SMR" id="Q04069"/>
<dbReference type="DIP" id="DIP-5263N"/>
<dbReference type="IntAct" id="Q04069">
    <property type="interactions" value="2"/>
</dbReference>
<dbReference type="STRING" id="4932.YDR431W"/>
<dbReference type="PaxDb" id="4932-YDR431W"/>
<dbReference type="EnsemblFungi" id="YDR431W_mRNA">
    <property type="protein sequence ID" value="YDR431W"/>
    <property type="gene ID" value="YDR431W"/>
</dbReference>
<dbReference type="AGR" id="SGD:S000002839"/>
<dbReference type="SGD" id="S000002839">
    <property type="gene designation" value="YDR431W"/>
</dbReference>
<dbReference type="HOGENOM" id="CLU_2265805_0_0_1"/>
<dbReference type="GO" id="GO:0016020">
    <property type="term" value="C:membrane"/>
    <property type="evidence" value="ECO:0007669"/>
    <property type="project" value="UniProtKB-SubCell"/>
</dbReference>
<organism>
    <name type="scientific">Saccharomyces cerevisiae (strain ATCC 204508 / S288c)</name>
    <name type="common">Baker's yeast</name>
    <dbReference type="NCBI Taxonomy" id="559292"/>
    <lineage>
        <taxon>Eukaryota</taxon>
        <taxon>Fungi</taxon>
        <taxon>Dikarya</taxon>
        <taxon>Ascomycota</taxon>
        <taxon>Saccharomycotina</taxon>
        <taxon>Saccharomycetes</taxon>
        <taxon>Saccharomycetales</taxon>
        <taxon>Saccharomycetaceae</taxon>
        <taxon>Saccharomyces</taxon>
    </lineage>
</organism>
<feature type="chain" id="PRO_0000299892" description="Putative uncharacterized protein YDR431W">
    <location>
        <begin position="1"/>
        <end position="103"/>
    </location>
</feature>
<feature type="transmembrane region" description="Helical" evidence="1">
    <location>
        <begin position="37"/>
        <end position="57"/>
    </location>
</feature>
<proteinExistence type="uncertain"/>
<comment type="subcellular location">
    <subcellularLocation>
        <location evidence="2">Membrane</location>
        <topology evidence="2">Single-pass membrane protein</topology>
    </subcellularLocation>
</comment>
<comment type="miscellaneous">
    <text evidence="2">Partially overlaps CYM1.</text>
</comment>
<comment type="caution">
    <text evidence="3">Product of a dubious gene prediction unlikely to encode a functional protein. Because of that it is not part of the S.cerevisiae S288c complete/reference proteome set.</text>
</comment>
<keyword id="KW-0472">Membrane</keyword>
<keyword id="KW-0812">Transmembrane</keyword>
<keyword id="KW-1133">Transmembrane helix</keyword>
<reference key="1">
    <citation type="journal article" date="1997" name="Nature">
        <title>The nucleotide sequence of Saccharomyces cerevisiae chromosome IV.</title>
        <authorList>
            <person name="Jacq C."/>
            <person name="Alt-Moerbe J."/>
            <person name="Andre B."/>
            <person name="Arnold W."/>
            <person name="Bahr A."/>
            <person name="Ballesta J.P.G."/>
            <person name="Bargues M."/>
            <person name="Baron L."/>
            <person name="Becker A."/>
            <person name="Biteau N."/>
            <person name="Bloecker H."/>
            <person name="Blugeon C."/>
            <person name="Boskovic J."/>
            <person name="Brandt P."/>
            <person name="Brueckner M."/>
            <person name="Buitrago M.J."/>
            <person name="Coster F."/>
            <person name="Delaveau T."/>
            <person name="del Rey F."/>
            <person name="Dujon B."/>
            <person name="Eide L.G."/>
            <person name="Garcia-Cantalejo J.M."/>
            <person name="Goffeau A."/>
            <person name="Gomez-Peris A."/>
            <person name="Granotier C."/>
            <person name="Hanemann V."/>
            <person name="Hankeln T."/>
            <person name="Hoheisel J.D."/>
            <person name="Jaeger W."/>
            <person name="Jimenez A."/>
            <person name="Jonniaux J.-L."/>
            <person name="Kraemer C."/>
            <person name="Kuester H."/>
            <person name="Laamanen P."/>
            <person name="Legros Y."/>
            <person name="Louis E.J."/>
            <person name="Moeller-Rieker S."/>
            <person name="Monnet A."/>
            <person name="Moro M."/>
            <person name="Mueller-Auer S."/>
            <person name="Nussbaumer B."/>
            <person name="Paricio N."/>
            <person name="Paulin L."/>
            <person name="Perea J."/>
            <person name="Perez-Alonso M."/>
            <person name="Perez-Ortin J.E."/>
            <person name="Pohl T.M."/>
            <person name="Prydz H."/>
            <person name="Purnelle B."/>
            <person name="Rasmussen S.W."/>
            <person name="Remacha M.A."/>
            <person name="Revuelta J.L."/>
            <person name="Rieger M."/>
            <person name="Salom D."/>
            <person name="Saluz H.P."/>
            <person name="Saiz J.E."/>
            <person name="Saren A.-M."/>
            <person name="Schaefer M."/>
            <person name="Scharfe M."/>
            <person name="Schmidt E.R."/>
            <person name="Schneider C."/>
            <person name="Scholler P."/>
            <person name="Schwarz S."/>
            <person name="Soler-Mira A."/>
            <person name="Urrestarazu L.A."/>
            <person name="Verhasselt P."/>
            <person name="Vissers S."/>
            <person name="Voet M."/>
            <person name="Volckaert G."/>
            <person name="Wagner G."/>
            <person name="Wambutt R."/>
            <person name="Wedler E."/>
            <person name="Wedler H."/>
            <person name="Woelfl S."/>
            <person name="Harris D.E."/>
            <person name="Bowman S."/>
            <person name="Brown D."/>
            <person name="Churcher C.M."/>
            <person name="Connor R."/>
            <person name="Dedman K."/>
            <person name="Gentles S."/>
            <person name="Hamlin N."/>
            <person name="Hunt S."/>
            <person name="Jones L."/>
            <person name="McDonald S."/>
            <person name="Murphy L.D."/>
            <person name="Niblett D."/>
            <person name="Odell C."/>
            <person name="Oliver K."/>
            <person name="Rajandream M.A."/>
            <person name="Richards C."/>
            <person name="Shore L."/>
            <person name="Walsh S.V."/>
            <person name="Barrell B.G."/>
            <person name="Dietrich F.S."/>
            <person name="Mulligan J.T."/>
            <person name="Allen E."/>
            <person name="Araujo R."/>
            <person name="Aviles E."/>
            <person name="Berno A."/>
            <person name="Carpenter J."/>
            <person name="Chen E."/>
            <person name="Cherry J.M."/>
            <person name="Chung E."/>
            <person name="Duncan M."/>
            <person name="Hunicke-Smith S."/>
            <person name="Hyman R.W."/>
            <person name="Komp C."/>
            <person name="Lashkari D."/>
            <person name="Lew H."/>
            <person name="Lin D."/>
            <person name="Mosedale D."/>
            <person name="Nakahara K."/>
            <person name="Namath A."/>
            <person name="Oefner P."/>
            <person name="Oh C."/>
            <person name="Petel F.X."/>
            <person name="Roberts D."/>
            <person name="Schramm S."/>
            <person name="Schroeder M."/>
            <person name="Shogren T."/>
            <person name="Shroff N."/>
            <person name="Winant A."/>
            <person name="Yelton M.A."/>
            <person name="Botstein D."/>
            <person name="Davis R.W."/>
            <person name="Johnston M."/>
            <person name="Andrews S."/>
            <person name="Brinkman R."/>
            <person name="Cooper J."/>
            <person name="Ding H."/>
            <person name="Du Z."/>
            <person name="Favello A."/>
            <person name="Fulton L."/>
            <person name="Gattung S."/>
            <person name="Greco T."/>
            <person name="Hallsworth K."/>
            <person name="Hawkins J."/>
            <person name="Hillier L.W."/>
            <person name="Jier M."/>
            <person name="Johnson D."/>
            <person name="Johnston L."/>
            <person name="Kirsten J."/>
            <person name="Kucaba T."/>
            <person name="Langston Y."/>
            <person name="Latreille P."/>
            <person name="Le T."/>
            <person name="Mardis E."/>
            <person name="Menezes S."/>
            <person name="Miller N."/>
            <person name="Nhan M."/>
            <person name="Pauley A."/>
            <person name="Peluso D."/>
            <person name="Rifkin L."/>
            <person name="Riles L."/>
            <person name="Taich A."/>
            <person name="Trevaskis E."/>
            <person name="Vignati D."/>
            <person name="Wilcox L."/>
            <person name="Wohldman P."/>
            <person name="Vaudin M."/>
            <person name="Wilson R."/>
            <person name="Waterston R."/>
            <person name="Albermann K."/>
            <person name="Hani J."/>
            <person name="Heumann K."/>
            <person name="Kleine K."/>
            <person name="Mewes H.-W."/>
            <person name="Zollner A."/>
            <person name="Zaccaria P."/>
        </authorList>
    </citation>
    <scope>NUCLEOTIDE SEQUENCE [LARGE SCALE GENOMIC DNA]</scope>
    <source>
        <strain>ATCC 204508 / S288c</strain>
    </source>
</reference>
<reference key="2">
    <citation type="journal article" date="2014" name="G3 (Bethesda)">
        <title>The reference genome sequence of Saccharomyces cerevisiae: Then and now.</title>
        <authorList>
            <person name="Engel S.R."/>
            <person name="Dietrich F.S."/>
            <person name="Fisk D.G."/>
            <person name="Binkley G."/>
            <person name="Balakrishnan R."/>
            <person name="Costanzo M.C."/>
            <person name="Dwight S.S."/>
            <person name="Hitz B.C."/>
            <person name="Karra K."/>
            <person name="Nash R.S."/>
            <person name="Weng S."/>
            <person name="Wong E.D."/>
            <person name="Lloyd P."/>
            <person name="Skrzypek M.S."/>
            <person name="Miyasato S.R."/>
            <person name="Simison M."/>
            <person name="Cherry J.M."/>
        </authorList>
    </citation>
    <scope>GENOME REANNOTATION</scope>
    <source>
        <strain>ATCC 204508 / S288c</strain>
    </source>
</reference>